<sequence>MIQAIVTDIEGTTTDIRFVQQVLFPYARERLTPFLREHQQDEEVANALLSLRREVEQPDADIETLITTLHSFMDEDRKSTALKAIQGIIWRSGYLQGDFRGHLYPDVTPQLADWQQQGLKLYVYSSGSVDAQKLLFGYSDAGDLQPLFSGYFDTHVGAKREVSAYQNIAHQLAIAPQALLFLSDIRQELDAAQLAGWQTCQLIRDLPDSESRHLQVSRFDEIDIEGFTA</sequence>
<comment type="function">
    <text evidence="1">Bifunctional enzyme that catalyzes the enolization of 2,3-diketo-5-methylthiopentyl-1-phosphate (DK-MTP-1-P) into the intermediate 2-hydroxy-3-keto-5-methylthiopentenyl-1-phosphate (HK-MTPenyl-1-P), which is then dephosphorylated to form the acireductone 1,2-dihydroxy-3-keto-5-methylthiopentene (DHK-MTPene).</text>
</comment>
<comment type="catalytic activity">
    <reaction evidence="1">
        <text>5-methylsulfanyl-2,3-dioxopentyl phosphate + H2O = 1,2-dihydroxy-5-(methylsulfanyl)pent-1-en-3-one + phosphate</text>
        <dbReference type="Rhea" id="RHEA:21700"/>
        <dbReference type="ChEBI" id="CHEBI:15377"/>
        <dbReference type="ChEBI" id="CHEBI:43474"/>
        <dbReference type="ChEBI" id="CHEBI:49252"/>
        <dbReference type="ChEBI" id="CHEBI:58828"/>
        <dbReference type="EC" id="3.1.3.77"/>
    </reaction>
</comment>
<comment type="cofactor">
    <cofactor evidence="1">
        <name>Mg(2+)</name>
        <dbReference type="ChEBI" id="CHEBI:18420"/>
    </cofactor>
    <text evidence="1">Binds 1 Mg(2+) ion per subunit.</text>
</comment>
<comment type="pathway">
    <text evidence="1">Amino-acid biosynthesis; L-methionine biosynthesis via salvage pathway; L-methionine from S-methyl-5-thio-alpha-D-ribose 1-phosphate: step 3/6.</text>
</comment>
<comment type="pathway">
    <text evidence="1">Amino-acid biosynthesis; L-methionine biosynthesis via salvage pathway; L-methionine from S-methyl-5-thio-alpha-D-ribose 1-phosphate: step 4/6.</text>
</comment>
<comment type="subunit">
    <text evidence="1">Monomer.</text>
</comment>
<comment type="similarity">
    <text evidence="1">Belongs to the HAD-like hydrolase superfamily. MasA/MtnC family.</text>
</comment>
<name>MTNC_YERE8</name>
<accession>A1JP11</accession>
<organism>
    <name type="scientific">Yersinia enterocolitica serotype O:8 / biotype 1B (strain NCTC 13174 / 8081)</name>
    <dbReference type="NCBI Taxonomy" id="393305"/>
    <lineage>
        <taxon>Bacteria</taxon>
        <taxon>Pseudomonadati</taxon>
        <taxon>Pseudomonadota</taxon>
        <taxon>Gammaproteobacteria</taxon>
        <taxon>Enterobacterales</taxon>
        <taxon>Yersiniaceae</taxon>
        <taxon>Yersinia</taxon>
    </lineage>
</organism>
<proteinExistence type="inferred from homology"/>
<dbReference type="EC" id="3.1.3.77" evidence="1"/>
<dbReference type="EMBL" id="AM286415">
    <property type="protein sequence ID" value="CAL13263.1"/>
    <property type="molecule type" value="Genomic_DNA"/>
</dbReference>
<dbReference type="RefSeq" id="WP_005167481.1">
    <property type="nucleotide sequence ID" value="NC_008800.1"/>
</dbReference>
<dbReference type="RefSeq" id="YP_001007407.1">
    <property type="nucleotide sequence ID" value="NC_008800.1"/>
</dbReference>
<dbReference type="SMR" id="A1JP11"/>
<dbReference type="KEGG" id="yen:YE3232"/>
<dbReference type="PATRIC" id="fig|393305.7.peg.3436"/>
<dbReference type="eggNOG" id="COG4229">
    <property type="taxonomic scope" value="Bacteria"/>
</dbReference>
<dbReference type="HOGENOM" id="CLU_023273_0_0_6"/>
<dbReference type="OrthoDB" id="9797416at2"/>
<dbReference type="UniPathway" id="UPA00904">
    <property type="reaction ID" value="UER00876"/>
</dbReference>
<dbReference type="UniPathway" id="UPA00904">
    <property type="reaction ID" value="UER00877"/>
</dbReference>
<dbReference type="Proteomes" id="UP000000642">
    <property type="component" value="Chromosome"/>
</dbReference>
<dbReference type="GO" id="GO:0043715">
    <property type="term" value="F:2,3-diketo-5-methylthiopentyl-1-phosphate enolase activity"/>
    <property type="evidence" value="ECO:0007669"/>
    <property type="project" value="UniProtKB-UniRule"/>
</dbReference>
<dbReference type="GO" id="GO:0043716">
    <property type="term" value="F:2-hydroxy-3-keto-5-methylthiopentenyl-1-phosphate phosphatase activity"/>
    <property type="evidence" value="ECO:0007669"/>
    <property type="project" value="UniProtKB-UniRule"/>
</dbReference>
<dbReference type="GO" id="GO:0043874">
    <property type="term" value="F:acireductone synthase activity"/>
    <property type="evidence" value="ECO:0007669"/>
    <property type="project" value="UniProtKB-EC"/>
</dbReference>
<dbReference type="GO" id="GO:0000287">
    <property type="term" value="F:magnesium ion binding"/>
    <property type="evidence" value="ECO:0007669"/>
    <property type="project" value="UniProtKB-UniRule"/>
</dbReference>
<dbReference type="GO" id="GO:0019509">
    <property type="term" value="P:L-methionine salvage from methylthioadenosine"/>
    <property type="evidence" value="ECO:0007669"/>
    <property type="project" value="UniProtKB-UniRule"/>
</dbReference>
<dbReference type="CDD" id="cd01629">
    <property type="entry name" value="HAD_EP"/>
    <property type="match status" value="1"/>
</dbReference>
<dbReference type="Gene3D" id="1.10.720.60">
    <property type="match status" value="1"/>
</dbReference>
<dbReference type="Gene3D" id="3.40.50.1000">
    <property type="entry name" value="HAD superfamily/HAD-like"/>
    <property type="match status" value="1"/>
</dbReference>
<dbReference type="HAMAP" id="MF_01681">
    <property type="entry name" value="Salvage_MtnC"/>
    <property type="match status" value="1"/>
</dbReference>
<dbReference type="InterPro" id="IPR023943">
    <property type="entry name" value="Enolase-ppase_E1"/>
</dbReference>
<dbReference type="InterPro" id="IPR036412">
    <property type="entry name" value="HAD-like_sf"/>
</dbReference>
<dbReference type="InterPro" id="IPR006439">
    <property type="entry name" value="HAD-SF_hydro_IA"/>
</dbReference>
<dbReference type="InterPro" id="IPR023214">
    <property type="entry name" value="HAD_sf"/>
</dbReference>
<dbReference type="NCBIfam" id="TIGR01691">
    <property type="entry name" value="enolase-ppase"/>
    <property type="match status" value="1"/>
</dbReference>
<dbReference type="PANTHER" id="PTHR20371">
    <property type="entry name" value="ENOLASE-PHOSPHATASE E1"/>
    <property type="match status" value="1"/>
</dbReference>
<dbReference type="PANTHER" id="PTHR20371:SF1">
    <property type="entry name" value="ENOLASE-PHOSPHATASE E1"/>
    <property type="match status" value="1"/>
</dbReference>
<dbReference type="Pfam" id="PF00702">
    <property type="entry name" value="Hydrolase"/>
    <property type="match status" value="1"/>
</dbReference>
<dbReference type="PRINTS" id="PR00413">
    <property type="entry name" value="HADHALOGNASE"/>
</dbReference>
<dbReference type="SFLD" id="SFLDF00044">
    <property type="entry name" value="enolase-phosphatase"/>
    <property type="match status" value="1"/>
</dbReference>
<dbReference type="SFLD" id="SFLDS00003">
    <property type="entry name" value="Haloacid_Dehalogenase"/>
    <property type="match status" value="1"/>
</dbReference>
<dbReference type="SUPFAM" id="SSF56784">
    <property type="entry name" value="HAD-like"/>
    <property type="match status" value="1"/>
</dbReference>
<gene>
    <name evidence="1" type="primary">mtnC</name>
    <name type="ordered locus">YE3232</name>
</gene>
<keyword id="KW-0028">Amino-acid biosynthesis</keyword>
<keyword id="KW-0378">Hydrolase</keyword>
<keyword id="KW-0460">Magnesium</keyword>
<keyword id="KW-0479">Metal-binding</keyword>
<keyword id="KW-0486">Methionine biosynthesis</keyword>
<evidence type="ECO:0000255" key="1">
    <source>
        <dbReference type="HAMAP-Rule" id="MF_01681"/>
    </source>
</evidence>
<reference key="1">
    <citation type="journal article" date="2006" name="PLoS Genet.">
        <title>The complete genome sequence and comparative genome analysis of the high pathogenicity Yersinia enterocolitica strain 8081.</title>
        <authorList>
            <person name="Thomson N.R."/>
            <person name="Howard S."/>
            <person name="Wren B.W."/>
            <person name="Holden M.T.G."/>
            <person name="Crossman L."/>
            <person name="Challis G.L."/>
            <person name="Churcher C."/>
            <person name="Mungall K."/>
            <person name="Brooks K."/>
            <person name="Chillingworth T."/>
            <person name="Feltwell T."/>
            <person name="Abdellah Z."/>
            <person name="Hauser H."/>
            <person name="Jagels K."/>
            <person name="Maddison M."/>
            <person name="Moule S."/>
            <person name="Sanders M."/>
            <person name="Whitehead S."/>
            <person name="Quail M.A."/>
            <person name="Dougan G."/>
            <person name="Parkhill J."/>
            <person name="Prentice M.B."/>
        </authorList>
    </citation>
    <scope>NUCLEOTIDE SEQUENCE [LARGE SCALE GENOMIC DNA]</scope>
    <source>
        <strain>NCTC 13174 / 8081</strain>
    </source>
</reference>
<feature type="chain" id="PRO_0000357439" description="Enolase-phosphatase E1">
    <location>
        <begin position="1"/>
        <end position="229"/>
    </location>
</feature>
<protein>
    <recommendedName>
        <fullName evidence="1">Enolase-phosphatase E1</fullName>
        <ecNumber evidence="1">3.1.3.77</ecNumber>
    </recommendedName>
    <alternativeName>
        <fullName evidence="1">2,3-diketo-5-methylthio-1-phosphopentane phosphatase</fullName>
    </alternativeName>
</protein>